<keyword id="KW-0687">Ribonucleoprotein</keyword>
<keyword id="KW-0689">Ribosomal protein</keyword>
<keyword id="KW-0694">RNA-binding</keyword>
<keyword id="KW-0699">rRNA-binding</keyword>
<keyword id="KW-0820">tRNA-binding</keyword>
<comment type="function">
    <text evidence="1">This is one of the proteins that bind and probably mediate the attachment of the 5S RNA into the large ribosomal subunit, where it forms part of the central protuberance. In the 70S ribosome it contacts protein S13 of the 30S subunit (bridge B1b), connecting the 2 subunits; this bridge is implicated in subunit movement. Contacts the P site tRNA; the 5S rRNA and some of its associated proteins might help stabilize positioning of ribosome-bound tRNAs.</text>
</comment>
<comment type="subunit">
    <text evidence="1">Part of the 50S ribosomal subunit; part of the 5S rRNA/L5/L18/L25 subcomplex. Contacts the 5S rRNA and the P site tRNA. Forms a bridge to the 30S subunit in the 70S ribosome.</text>
</comment>
<comment type="similarity">
    <text evidence="1">Belongs to the universal ribosomal protein uL5 family.</text>
</comment>
<organism>
    <name type="scientific">Rhodopseudomonas palustris (strain BisB5)</name>
    <dbReference type="NCBI Taxonomy" id="316057"/>
    <lineage>
        <taxon>Bacteria</taxon>
        <taxon>Pseudomonadati</taxon>
        <taxon>Pseudomonadota</taxon>
        <taxon>Alphaproteobacteria</taxon>
        <taxon>Hyphomicrobiales</taxon>
        <taxon>Nitrobacteraceae</taxon>
        <taxon>Rhodopseudomonas</taxon>
    </lineage>
</organism>
<name>RL5_RHOPS</name>
<accession>Q134U1</accession>
<evidence type="ECO:0000255" key="1">
    <source>
        <dbReference type="HAMAP-Rule" id="MF_01333"/>
    </source>
</evidence>
<evidence type="ECO:0000305" key="2"/>
<sequence length="185" mass="20974">MAETAYVPRLRTEYDKSIRTQLTEKFGYGNVMQVPRLDKVVLNMGIGEAVNDRKKAEQAAADMALIAGQKPIITYSRVAISTFKLRENQPIGCKVTLRKAKMYEFIDRLITVALPRVRDFRGLNPKSFDGRGNYSLGIKEHIIFPEIDFDKSGESWGMDITVCTTARSDDEARALLTAFNFPFRQ</sequence>
<proteinExistence type="inferred from homology"/>
<protein>
    <recommendedName>
        <fullName evidence="1">Large ribosomal subunit protein uL5</fullName>
    </recommendedName>
    <alternativeName>
        <fullName evidence="2">50S ribosomal protein L5</fullName>
    </alternativeName>
</protein>
<dbReference type="EMBL" id="CP000283">
    <property type="protein sequence ID" value="ABE40398.1"/>
    <property type="molecule type" value="Genomic_DNA"/>
</dbReference>
<dbReference type="SMR" id="Q134U1"/>
<dbReference type="STRING" id="316057.RPD_3172"/>
<dbReference type="KEGG" id="rpd:RPD_3172"/>
<dbReference type="eggNOG" id="COG0094">
    <property type="taxonomic scope" value="Bacteria"/>
</dbReference>
<dbReference type="HOGENOM" id="CLU_061015_2_1_5"/>
<dbReference type="BioCyc" id="RPAL316057:RPD_RS15925-MONOMER"/>
<dbReference type="Proteomes" id="UP000001818">
    <property type="component" value="Chromosome"/>
</dbReference>
<dbReference type="GO" id="GO:1990904">
    <property type="term" value="C:ribonucleoprotein complex"/>
    <property type="evidence" value="ECO:0007669"/>
    <property type="project" value="UniProtKB-KW"/>
</dbReference>
<dbReference type="GO" id="GO:0005840">
    <property type="term" value="C:ribosome"/>
    <property type="evidence" value="ECO:0007669"/>
    <property type="project" value="UniProtKB-KW"/>
</dbReference>
<dbReference type="GO" id="GO:0019843">
    <property type="term" value="F:rRNA binding"/>
    <property type="evidence" value="ECO:0007669"/>
    <property type="project" value="UniProtKB-UniRule"/>
</dbReference>
<dbReference type="GO" id="GO:0003735">
    <property type="term" value="F:structural constituent of ribosome"/>
    <property type="evidence" value="ECO:0007669"/>
    <property type="project" value="InterPro"/>
</dbReference>
<dbReference type="GO" id="GO:0000049">
    <property type="term" value="F:tRNA binding"/>
    <property type="evidence" value="ECO:0007669"/>
    <property type="project" value="UniProtKB-UniRule"/>
</dbReference>
<dbReference type="GO" id="GO:0006412">
    <property type="term" value="P:translation"/>
    <property type="evidence" value="ECO:0007669"/>
    <property type="project" value="UniProtKB-UniRule"/>
</dbReference>
<dbReference type="FunFam" id="3.30.1440.10:FF:000001">
    <property type="entry name" value="50S ribosomal protein L5"/>
    <property type="match status" value="1"/>
</dbReference>
<dbReference type="Gene3D" id="3.30.1440.10">
    <property type="match status" value="1"/>
</dbReference>
<dbReference type="HAMAP" id="MF_01333_B">
    <property type="entry name" value="Ribosomal_uL5_B"/>
    <property type="match status" value="1"/>
</dbReference>
<dbReference type="InterPro" id="IPR002132">
    <property type="entry name" value="Ribosomal_uL5"/>
</dbReference>
<dbReference type="InterPro" id="IPR020930">
    <property type="entry name" value="Ribosomal_uL5_bac-type"/>
</dbReference>
<dbReference type="InterPro" id="IPR031309">
    <property type="entry name" value="Ribosomal_uL5_C"/>
</dbReference>
<dbReference type="InterPro" id="IPR020929">
    <property type="entry name" value="Ribosomal_uL5_CS"/>
</dbReference>
<dbReference type="InterPro" id="IPR022803">
    <property type="entry name" value="Ribosomal_uL5_dom_sf"/>
</dbReference>
<dbReference type="InterPro" id="IPR031310">
    <property type="entry name" value="Ribosomal_uL5_N"/>
</dbReference>
<dbReference type="NCBIfam" id="NF000585">
    <property type="entry name" value="PRK00010.1"/>
    <property type="match status" value="1"/>
</dbReference>
<dbReference type="PANTHER" id="PTHR11994">
    <property type="entry name" value="60S RIBOSOMAL PROTEIN L11-RELATED"/>
    <property type="match status" value="1"/>
</dbReference>
<dbReference type="Pfam" id="PF00281">
    <property type="entry name" value="Ribosomal_L5"/>
    <property type="match status" value="1"/>
</dbReference>
<dbReference type="Pfam" id="PF00673">
    <property type="entry name" value="Ribosomal_L5_C"/>
    <property type="match status" value="1"/>
</dbReference>
<dbReference type="PIRSF" id="PIRSF002161">
    <property type="entry name" value="Ribosomal_L5"/>
    <property type="match status" value="1"/>
</dbReference>
<dbReference type="SUPFAM" id="SSF55282">
    <property type="entry name" value="RL5-like"/>
    <property type="match status" value="1"/>
</dbReference>
<dbReference type="PROSITE" id="PS00358">
    <property type="entry name" value="RIBOSOMAL_L5"/>
    <property type="match status" value="1"/>
</dbReference>
<feature type="chain" id="PRO_1000052809" description="Large ribosomal subunit protein uL5">
    <location>
        <begin position="1"/>
        <end position="185"/>
    </location>
</feature>
<reference key="1">
    <citation type="submission" date="2006-03" db="EMBL/GenBank/DDBJ databases">
        <title>Complete sequence of Rhodopseudomonas palustris BisB5.</title>
        <authorList>
            <consortium name="US DOE Joint Genome Institute"/>
            <person name="Copeland A."/>
            <person name="Lucas S."/>
            <person name="Lapidus A."/>
            <person name="Barry K."/>
            <person name="Detter J.C."/>
            <person name="Glavina del Rio T."/>
            <person name="Hammon N."/>
            <person name="Israni S."/>
            <person name="Dalin E."/>
            <person name="Tice H."/>
            <person name="Pitluck S."/>
            <person name="Chain P."/>
            <person name="Malfatti S."/>
            <person name="Shin M."/>
            <person name="Vergez L."/>
            <person name="Schmutz J."/>
            <person name="Larimer F."/>
            <person name="Land M."/>
            <person name="Hauser L."/>
            <person name="Pelletier D.A."/>
            <person name="Kyrpides N."/>
            <person name="Lykidis A."/>
            <person name="Oda Y."/>
            <person name="Harwood C.S."/>
            <person name="Richardson P."/>
        </authorList>
    </citation>
    <scope>NUCLEOTIDE SEQUENCE [LARGE SCALE GENOMIC DNA]</scope>
    <source>
        <strain>BisB5</strain>
    </source>
</reference>
<gene>
    <name evidence="1" type="primary">rplE</name>
    <name type="ordered locus">RPD_3172</name>
</gene>